<reference evidence="4" key="1">
    <citation type="journal article" date="2000" name="Dev. Biol.">
        <title>cDNA subtraction cloning reveals novel genes whose temporal and spatial expression indicates association with trophoblast invasion.</title>
        <authorList>
            <person name="Hemberger M."/>
            <person name="Himmelbauer H."/>
            <person name="Ruschmann J."/>
            <person name="Zeitz C."/>
            <person name="Fundele R."/>
        </authorList>
    </citation>
    <scope>NUCLEOTIDE SEQUENCE [MRNA]</scope>
</reference>
<reference evidence="3 5" key="2">
    <citation type="journal article" date="2000" name="Genomics">
        <title>PLAC1, an Xq26 gene with placenta-specific expression.</title>
        <authorList>
            <person name="Cocchia M."/>
            <person name="Huber R."/>
            <person name="Pantano S."/>
            <person name="Chen E.Y."/>
            <person name="Ma P."/>
            <person name="Forabosco A."/>
            <person name="Ko M.S.H."/>
            <person name="Schlessinger D."/>
        </authorList>
    </citation>
    <scope>NUCLEOTIDE SEQUENCE [MRNA]</scope>
    <scope>FUNCTION</scope>
    <scope>TISSUE SPECIFICITY</scope>
    <scope>DEVELOPMENTAL STAGE</scope>
</reference>
<reference evidence="7" key="3">
    <citation type="journal article" date="2005" name="Science">
        <title>The transcriptional landscape of the mammalian genome.</title>
        <authorList>
            <person name="Carninci P."/>
            <person name="Kasukawa T."/>
            <person name="Katayama S."/>
            <person name="Gough J."/>
            <person name="Frith M.C."/>
            <person name="Maeda N."/>
            <person name="Oyama R."/>
            <person name="Ravasi T."/>
            <person name="Lenhard B."/>
            <person name="Wells C."/>
            <person name="Kodzius R."/>
            <person name="Shimokawa K."/>
            <person name="Bajic V.B."/>
            <person name="Brenner S.E."/>
            <person name="Batalov S."/>
            <person name="Forrest A.R."/>
            <person name="Zavolan M."/>
            <person name="Davis M.J."/>
            <person name="Wilming L.G."/>
            <person name="Aidinis V."/>
            <person name="Allen J.E."/>
            <person name="Ambesi-Impiombato A."/>
            <person name="Apweiler R."/>
            <person name="Aturaliya R.N."/>
            <person name="Bailey T.L."/>
            <person name="Bansal M."/>
            <person name="Baxter L."/>
            <person name="Beisel K.W."/>
            <person name="Bersano T."/>
            <person name="Bono H."/>
            <person name="Chalk A.M."/>
            <person name="Chiu K.P."/>
            <person name="Choudhary V."/>
            <person name="Christoffels A."/>
            <person name="Clutterbuck D.R."/>
            <person name="Crowe M.L."/>
            <person name="Dalla E."/>
            <person name="Dalrymple B.P."/>
            <person name="de Bono B."/>
            <person name="Della Gatta G."/>
            <person name="di Bernardo D."/>
            <person name="Down T."/>
            <person name="Engstrom P."/>
            <person name="Fagiolini M."/>
            <person name="Faulkner G."/>
            <person name="Fletcher C.F."/>
            <person name="Fukushima T."/>
            <person name="Furuno M."/>
            <person name="Futaki S."/>
            <person name="Gariboldi M."/>
            <person name="Georgii-Hemming P."/>
            <person name="Gingeras T.R."/>
            <person name="Gojobori T."/>
            <person name="Green R.E."/>
            <person name="Gustincich S."/>
            <person name="Harbers M."/>
            <person name="Hayashi Y."/>
            <person name="Hensch T.K."/>
            <person name="Hirokawa N."/>
            <person name="Hill D."/>
            <person name="Huminiecki L."/>
            <person name="Iacono M."/>
            <person name="Ikeo K."/>
            <person name="Iwama A."/>
            <person name="Ishikawa T."/>
            <person name="Jakt M."/>
            <person name="Kanapin A."/>
            <person name="Katoh M."/>
            <person name="Kawasawa Y."/>
            <person name="Kelso J."/>
            <person name="Kitamura H."/>
            <person name="Kitano H."/>
            <person name="Kollias G."/>
            <person name="Krishnan S.P."/>
            <person name="Kruger A."/>
            <person name="Kummerfeld S.K."/>
            <person name="Kurochkin I.V."/>
            <person name="Lareau L.F."/>
            <person name="Lazarevic D."/>
            <person name="Lipovich L."/>
            <person name="Liu J."/>
            <person name="Liuni S."/>
            <person name="McWilliam S."/>
            <person name="Madan Babu M."/>
            <person name="Madera M."/>
            <person name="Marchionni L."/>
            <person name="Matsuda H."/>
            <person name="Matsuzawa S."/>
            <person name="Miki H."/>
            <person name="Mignone F."/>
            <person name="Miyake S."/>
            <person name="Morris K."/>
            <person name="Mottagui-Tabar S."/>
            <person name="Mulder N."/>
            <person name="Nakano N."/>
            <person name="Nakauchi H."/>
            <person name="Ng P."/>
            <person name="Nilsson R."/>
            <person name="Nishiguchi S."/>
            <person name="Nishikawa S."/>
            <person name="Nori F."/>
            <person name="Ohara O."/>
            <person name="Okazaki Y."/>
            <person name="Orlando V."/>
            <person name="Pang K.C."/>
            <person name="Pavan W.J."/>
            <person name="Pavesi G."/>
            <person name="Pesole G."/>
            <person name="Petrovsky N."/>
            <person name="Piazza S."/>
            <person name="Reed J."/>
            <person name="Reid J.F."/>
            <person name="Ring B.Z."/>
            <person name="Ringwald M."/>
            <person name="Rost B."/>
            <person name="Ruan Y."/>
            <person name="Salzberg S.L."/>
            <person name="Sandelin A."/>
            <person name="Schneider C."/>
            <person name="Schoenbach C."/>
            <person name="Sekiguchi K."/>
            <person name="Semple C.A."/>
            <person name="Seno S."/>
            <person name="Sessa L."/>
            <person name="Sheng Y."/>
            <person name="Shibata Y."/>
            <person name="Shimada H."/>
            <person name="Shimada K."/>
            <person name="Silva D."/>
            <person name="Sinclair B."/>
            <person name="Sperling S."/>
            <person name="Stupka E."/>
            <person name="Sugiura K."/>
            <person name="Sultana R."/>
            <person name="Takenaka Y."/>
            <person name="Taki K."/>
            <person name="Tammoja K."/>
            <person name="Tan S.L."/>
            <person name="Tang S."/>
            <person name="Taylor M.S."/>
            <person name="Tegner J."/>
            <person name="Teichmann S.A."/>
            <person name="Ueda H.R."/>
            <person name="van Nimwegen E."/>
            <person name="Verardo R."/>
            <person name="Wei C.L."/>
            <person name="Yagi K."/>
            <person name="Yamanishi H."/>
            <person name="Zabarovsky E."/>
            <person name="Zhu S."/>
            <person name="Zimmer A."/>
            <person name="Hide W."/>
            <person name="Bult C."/>
            <person name="Grimmond S.M."/>
            <person name="Teasdale R.D."/>
            <person name="Liu E.T."/>
            <person name="Brusic V."/>
            <person name="Quackenbush J."/>
            <person name="Wahlestedt C."/>
            <person name="Mattick J.S."/>
            <person name="Hume D.A."/>
            <person name="Kai C."/>
            <person name="Sasaki D."/>
            <person name="Tomaru Y."/>
            <person name="Fukuda S."/>
            <person name="Kanamori-Katayama M."/>
            <person name="Suzuki M."/>
            <person name="Aoki J."/>
            <person name="Arakawa T."/>
            <person name="Iida J."/>
            <person name="Imamura K."/>
            <person name="Itoh M."/>
            <person name="Kato T."/>
            <person name="Kawaji H."/>
            <person name="Kawagashira N."/>
            <person name="Kawashima T."/>
            <person name="Kojima M."/>
            <person name="Kondo S."/>
            <person name="Konno H."/>
            <person name="Nakano K."/>
            <person name="Ninomiya N."/>
            <person name="Nishio T."/>
            <person name="Okada M."/>
            <person name="Plessy C."/>
            <person name="Shibata K."/>
            <person name="Shiraki T."/>
            <person name="Suzuki S."/>
            <person name="Tagami M."/>
            <person name="Waki K."/>
            <person name="Watahiki A."/>
            <person name="Okamura-Oho Y."/>
            <person name="Suzuki H."/>
            <person name="Kawai J."/>
            <person name="Hayashizaki Y."/>
        </authorList>
    </citation>
    <scope>NUCLEOTIDE SEQUENCE [LARGE SCALE MRNA]</scope>
    <source>
        <strain evidence="7">C57BL/6J</strain>
        <tissue evidence="7">Placenta</tissue>
    </source>
</reference>
<reference evidence="6" key="4">
    <citation type="journal article" date="2004" name="Genome Res.">
        <title>The status, quality, and expansion of the NIH full-length cDNA project: the Mammalian Gene Collection (MGC).</title>
        <authorList>
            <consortium name="The MGC Project Team"/>
        </authorList>
    </citation>
    <scope>NUCLEOTIDE SEQUENCE [LARGE SCALE MRNA]</scope>
    <source>
        <strain evidence="6">C57BL/6J</strain>
        <tissue evidence="6">Embryo</tissue>
    </source>
</reference>
<name>PLAC1_MOUSE</name>
<protein>
    <recommendedName>
        <fullName>Placenta-specific protein 1</fullName>
    </recommendedName>
    <alternativeName>
        <fullName>EPCS26</fullName>
    </alternativeName>
</protein>
<proteinExistence type="evidence at transcript level"/>
<feature type="signal peptide" evidence="1">
    <location>
        <begin position="1"/>
        <end position="23"/>
    </location>
</feature>
<feature type="chain" id="PRO_0000251145" description="Placenta-specific protein 1" evidence="1">
    <location>
        <begin position="24"/>
        <end position="173"/>
    </location>
</feature>
<feature type="sequence conflict" description="In Ref. 4; AAH51666." evidence="3" ref="4">
    <original>H</original>
    <variation>R</variation>
    <location>
        <position position="69"/>
    </location>
</feature>
<feature type="sequence conflict" description="In Ref. 4; AAH51666." evidence="3" ref="4">
    <original>E</original>
    <variation>G</variation>
    <location>
        <position position="157"/>
    </location>
</feature>
<feature type="sequence conflict" description="In Ref. 3; BAE26717." evidence="3" ref="3">
    <original>P</original>
    <variation>R</variation>
    <location>
        <position position="159"/>
    </location>
</feature>
<dbReference type="EMBL" id="AF250838">
    <property type="protein sequence ID" value="AAF81275.1"/>
    <property type="molecule type" value="mRNA"/>
</dbReference>
<dbReference type="EMBL" id="AF234653">
    <property type="protein sequence ID" value="AAG22595.1"/>
    <property type="molecule type" value="mRNA"/>
</dbReference>
<dbReference type="EMBL" id="AK005501">
    <property type="protein sequence ID" value="BAB24083.1"/>
    <property type="molecule type" value="mRNA"/>
</dbReference>
<dbReference type="EMBL" id="AK145876">
    <property type="protein sequence ID" value="BAE26717.1"/>
    <property type="molecule type" value="mRNA"/>
</dbReference>
<dbReference type="EMBL" id="BC051666">
    <property type="protein sequence ID" value="AAH51666.1"/>
    <property type="molecule type" value="mRNA"/>
</dbReference>
<dbReference type="CCDS" id="CCDS30128.1"/>
<dbReference type="RefSeq" id="NP_001344731.1">
    <property type="nucleotide sequence ID" value="NM_001357802.2"/>
</dbReference>
<dbReference type="RefSeq" id="NP_001413248.1">
    <property type="nucleotide sequence ID" value="NM_001426319.1"/>
</dbReference>
<dbReference type="RefSeq" id="NP_062411.1">
    <property type="nucleotide sequence ID" value="NM_019538.5"/>
</dbReference>
<dbReference type="RefSeq" id="XP_006541587.1">
    <property type="nucleotide sequence ID" value="XM_006541524.1"/>
</dbReference>
<dbReference type="RefSeq" id="XP_006541588.1">
    <property type="nucleotide sequence ID" value="XM_006541525.1"/>
</dbReference>
<dbReference type="RefSeq" id="XP_011249318.1">
    <property type="nucleotide sequence ID" value="XM_011251016.3"/>
</dbReference>
<dbReference type="SMR" id="Q9JI83"/>
<dbReference type="FunCoup" id="Q9JI83">
    <property type="interactions" value="3"/>
</dbReference>
<dbReference type="STRING" id="10090.ENSMUSP00000110492"/>
<dbReference type="iPTMnet" id="Q9JI83"/>
<dbReference type="PhosphoSitePlus" id="Q9JI83"/>
<dbReference type="jPOST" id="Q9JI83"/>
<dbReference type="PaxDb" id="10090-ENSMUSP00000110492"/>
<dbReference type="ProteomicsDB" id="289667"/>
<dbReference type="Antibodypedia" id="44877">
    <property type="antibodies" value="152 antibodies from 26 providers"/>
</dbReference>
<dbReference type="Ensembl" id="ENSMUST00000074861.9">
    <property type="protein sequence ID" value="ENSMUSP00000074404.3"/>
    <property type="gene ID" value="ENSMUSG00000061082.12"/>
</dbReference>
<dbReference type="Ensembl" id="ENSMUST00000114843.9">
    <property type="protein sequence ID" value="ENSMUSP00000110492.3"/>
    <property type="gene ID" value="ENSMUSG00000061082.12"/>
</dbReference>
<dbReference type="Ensembl" id="ENSMUST00000174390.2">
    <property type="protein sequence ID" value="ENSMUSP00000133862.2"/>
    <property type="gene ID" value="ENSMUSG00000061082.12"/>
</dbReference>
<dbReference type="GeneID" id="56096"/>
<dbReference type="KEGG" id="mmu:56096"/>
<dbReference type="UCSC" id="uc009tet.1">
    <property type="organism name" value="mouse"/>
</dbReference>
<dbReference type="AGR" id="MGI:1926287"/>
<dbReference type="CTD" id="10761"/>
<dbReference type="MGI" id="MGI:1926287">
    <property type="gene designation" value="Plac1"/>
</dbReference>
<dbReference type="VEuPathDB" id="HostDB:ENSMUSG00000061082"/>
<dbReference type="eggNOG" id="ENOG502RMFF">
    <property type="taxonomic scope" value="Eukaryota"/>
</dbReference>
<dbReference type="GeneTree" id="ENSGT00530000064049"/>
<dbReference type="HOGENOM" id="CLU_118376_0_0_1"/>
<dbReference type="InParanoid" id="Q9JI83"/>
<dbReference type="OMA" id="GLGCPAN"/>
<dbReference type="OrthoDB" id="9830918at2759"/>
<dbReference type="PhylomeDB" id="Q9JI83"/>
<dbReference type="TreeFam" id="TF338479"/>
<dbReference type="BioGRID-ORCS" id="56096">
    <property type="hits" value="4 hits in 76 CRISPR screens"/>
</dbReference>
<dbReference type="PRO" id="PR:Q9JI83"/>
<dbReference type="Proteomes" id="UP000000589">
    <property type="component" value="Chromosome X"/>
</dbReference>
<dbReference type="RNAct" id="Q9JI83">
    <property type="molecule type" value="protein"/>
</dbReference>
<dbReference type="Bgee" id="ENSMUSG00000061082">
    <property type="expression patterns" value="Expressed in ectoplacental cone and 97 other cell types or tissues"/>
</dbReference>
<dbReference type="GO" id="GO:0005576">
    <property type="term" value="C:extracellular region"/>
    <property type="evidence" value="ECO:0000304"/>
    <property type="project" value="MGI"/>
</dbReference>
<dbReference type="GO" id="GO:0001890">
    <property type="term" value="P:placenta development"/>
    <property type="evidence" value="ECO:0000270"/>
    <property type="project" value="UniProtKB"/>
</dbReference>
<dbReference type="GO" id="GO:0090214">
    <property type="term" value="P:spongiotrophoblast layer developmental growth"/>
    <property type="evidence" value="ECO:0000315"/>
    <property type="project" value="MGI"/>
</dbReference>
<dbReference type="FunFam" id="2.60.40.3210:FF:000011">
    <property type="entry name" value="Placenta-specific protein 1"/>
    <property type="match status" value="1"/>
</dbReference>
<dbReference type="Gene3D" id="2.60.40.3210">
    <property type="entry name" value="Zona pellucida, ZP-N domain"/>
    <property type="match status" value="1"/>
</dbReference>
<dbReference type="InterPro" id="IPR033222">
    <property type="entry name" value="PLAC1_fam"/>
</dbReference>
<dbReference type="InterPro" id="IPR055356">
    <property type="entry name" value="ZP-N"/>
</dbReference>
<dbReference type="PANTHER" id="PTHR14380">
    <property type="entry name" value="PLACENTA-SPECIFIC PROTEIN 1"/>
    <property type="match status" value="1"/>
</dbReference>
<dbReference type="PANTHER" id="PTHR14380:SF2">
    <property type="entry name" value="PLACENTA-SPECIFIC PROTEIN 1"/>
    <property type="match status" value="1"/>
</dbReference>
<dbReference type="Pfam" id="PF23344">
    <property type="entry name" value="ZP-N"/>
    <property type="match status" value="1"/>
</dbReference>
<evidence type="ECO:0000255" key="1"/>
<evidence type="ECO:0000269" key="2">
    <source>
    </source>
</evidence>
<evidence type="ECO:0000305" key="3"/>
<evidence type="ECO:0000312" key="4">
    <source>
        <dbReference type="EMBL" id="AAF81275.1"/>
    </source>
</evidence>
<evidence type="ECO:0000312" key="5">
    <source>
        <dbReference type="EMBL" id="AAG22595.1"/>
    </source>
</evidence>
<evidence type="ECO:0000312" key="6">
    <source>
        <dbReference type="EMBL" id="AAH51666.1"/>
    </source>
</evidence>
<evidence type="ECO:0000312" key="7">
    <source>
        <dbReference type="EMBL" id="BAB24083.1"/>
    </source>
</evidence>
<evidence type="ECO:0000312" key="8">
    <source>
        <dbReference type="MGI" id="MGI:1926287"/>
    </source>
</evidence>
<gene>
    <name evidence="8" type="primary">Plac1</name>
</gene>
<organism>
    <name type="scientific">Mus musculus</name>
    <name type="common">Mouse</name>
    <dbReference type="NCBI Taxonomy" id="10090"/>
    <lineage>
        <taxon>Eukaryota</taxon>
        <taxon>Metazoa</taxon>
        <taxon>Chordata</taxon>
        <taxon>Craniata</taxon>
        <taxon>Vertebrata</taxon>
        <taxon>Euteleostomi</taxon>
        <taxon>Mammalia</taxon>
        <taxon>Eutheria</taxon>
        <taxon>Euarchontoglires</taxon>
        <taxon>Glires</taxon>
        <taxon>Rodentia</taxon>
        <taxon>Myomorpha</taxon>
        <taxon>Muroidea</taxon>
        <taxon>Muridae</taxon>
        <taxon>Murinae</taxon>
        <taxon>Mus</taxon>
        <taxon>Mus</taxon>
    </lineage>
</organism>
<accession>Q9JI83</accession>
<accession>Q3UKT4</accession>
<accession>Q80WW3</accession>
<comment type="function">
    <text evidence="2">May play a role in placental development.</text>
</comment>
<comment type="subcellular location">
    <subcellularLocation>
        <location evidence="3">Secreted</location>
    </subcellularLocation>
</comment>
<comment type="tissue specificity">
    <text evidence="2">Expressed in placenta.</text>
</comment>
<comment type="developmental stage">
    <text evidence="2">Strongly expressed at 7 dpc and gradually declines with the progression of embryogenesis. Expression detected from 7.5 to 14.5 dpc in ectoplacental cone, trophoblast giant cells, and labyrinthine trophoblasts.</text>
</comment>
<comment type="similarity">
    <text evidence="3">Belongs to the PLAC1 family.</text>
</comment>
<keyword id="KW-0217">Developmental protein</keyword>
<keyword id="KW-1185">Reference proteome</keyword>
<keyword id="KW-0964">Secreted</keyword>
<keyword id="KW-0732">Signal</keyword>
<sequence length="173" mass="19626">MNLRKFLGGTVLVAFMLFSYSEQNQVNVLCSTDWFMVTVHPFLLNNDVYVHFYEVHLGLGCPPNHVHPHFYQFHYRVTECGIRIKAVSPDVVIYSSEIHYASKGSSTKYVIPVSCAAPRRSPWLTKPYSAKAPSNNMGATPKNDTSYHVFTLPEPSEQPNCSCPPYVYNQKSM</sequence>